<name>PANC_SULSY</name>
<protein>
    <recommendedName>
        <fullName evidence="1">Pantothenate synthetase</fullName>
        <shortName evidence="1">PS</shortName>
        <ecNumber evidence="1">6.3.2.1</ecNumber>
    </recommendedName>
    <alternativeName>
        <fullName evidence="1">Pantoate--beta-alanine ligase</fullName>
    </alternativeName>
    <alternativeName>
        <fullName evidence="1">Pantoate-activating enzyme</fullName>
    </alternativeName>
</protein>
<reference key="1">
    <citation type="journal article" date="2009" name="J. Bacteriol.">
        <title>Complete and draft genome sequences of six members of the Aquificales.</title>
        <authorList>
            <person name="Reysenbach A.-L."/>
            <person name="Hamamura N."/>
            <person name="Podar M."/>
            <person name="Griffiths E."/>
            <person name="Ferreira S."/>
            <person name="Hochstein R."/>
            <person name="Heidelberg J."/>
            <person name="Johnson J."/>
            <person name="Mead D."/>
            <person name="Pohorille A."/>
            <person name="Sarmiento M."/>
            <person name="Schweighofer K."/>
            <person name="Seshadri R."/>
            <person name="Voytek M.A."/>
        </authorList>
    </citation>
    <scope>NUCLEOTIDE SEQUENCE [LARGE SCALE GENOMIC DNA]</scope>
    <source>
        <strain>YO3AOP1</strain>
    </source>
</reference>
<accession>B2V652</accession>
<keyword id="KW-0067">ATP-binding</keyword>
<keyword id="KW-0963">Cytoplasm</keyword>
<keyword id="KW-0436">Ligase</keyword>
<keyword id="KW-0547">Nucleotide-binding</keyword>
<keyword id="KW-0566">Pantothenate biosynthesis</keyword>
<gene>
    <name evidence="1" type="primary">panC</name>
    <name type="ordered locus">SYO3AOP1_1524</name>
</gene>
<sequence>MEVITNPGQMQTLMLSLKKQGKKIGFVPTMGYLHEGHLSLIRCSKKENDITVVSIFVNPIQFGANEDFGRYPRDFERDKSLCEKENVDYIFYPSYEEMYPDGFQTYVEVAELSKGLCGDFRPGHFKGVATVVAKLFNIVCPDNVYFGKKDFQQLKVIQRMVKDLNFPVNVVGCPVVREPDGLAMSSRNKYLSDEERESALNISKALFEAKRMFEDGITDPNLIKERVRQIISQAKHLKEIQYVEIVDSNTLKPVDKVKKSDVLAVAVYIGNTRLIDNIEF</sequence>
<dbReference type="EC" id="6.3.2.1" evidence="1"/>
<dbReference type="EMBL" id="CP001080">
    <property type="protein sequence ID" value="ACD67125.1"/>
    <property type="molecule type" value="Genomic_DNA"/>
</dbReference>
<dbReference type="RefSeq" id="WP_012460182.1">
    <property type="nucleotide sequence ID" value="NC_010730.1"/>
</dbReference>
<dbReference type="SMR" id="B2V652"/>
<dbReference type="STRING" id="436114.SYO3AOP1_1524"/>
<dbReference type="KEGG" id="sul:SYO3AOP1_1524"/>
<dbReference type="eggNOG" id="COG0414">
    <property type="taxonomic scope" value="Bacteria"/>
</dbReference>
<dbReference type="HOGENOM" id="CLU_047148_0_0_0"/>
<dbReference type="UniPathway" id="UPA00028">
    <property type="reaction ID" value="UER00005"/>
</dbReference>
<dbReference type="GO" id="GO:0005829">
    <property type="term" value="C:cytosol"/>
    <property type="evidence" value="ECO:0007669"/>
    <property type="project" value="TreeGrafter"/>
</dbReference>
<dbReference type="GO" id="GO:0005524">
    <property type="term" value="F:ATP binding"/>
    <property type="evidence" value="ECO:0007669"/>
    <property type="project" value="UniProtKB-KW"/>
</dbReference>
<dbReference type="GO" id="GO:0004592">
    <property type="term" value="F:pantoate-beta-alanine ligase activity"/>
    <property type="evidence" value="ECO:0007669"/>
    <property type="project" value="UniProtKB-UniRule"/>
</dbReference>
<dbReference type="GO" id="GO:0015940">
    <property type="term" value="P:pantothenate biosynthetic process"/>
    <property type="evidence" value="ECO:0007669"/>
    <property type="project" value="UniProtKB-UniRule"/>
</dbReference>
<dbReference type="CDD" id="cd00560">
    <property type="entry name" value="PanC"/>
    <property type="match status" value="1"/>
</dbReference>
<dbReference type="FunFam" id="3.30.1300.10:FF:000001">
    <property type="entry name" value="Pantothenate synthetase"/>
    <property type="match status" value="1"/>
</dbReference>
<dbReference type="FunFam" id="3.40.50.620:FF:000013">
    <property type="entry name" value="Pantothenate synthetase"/>
    <property type="match status" value="1"/>
</dbReference>
<dbReference type="Gene3D" id="3.40.50.620">
    <property type="entry name" value="HUPs"/>
    <property type="match status" value="1"/>
</dbReference>
<dbReference type="Gene3D" id="3.30.1300.10">
    <property type="entry name" value="Pantoate-beta-alanine ligase, C-terminal domain"/>
    <property type="match status" value="1"/>
</dbReference>
<dbReference type="HAMAP" id="MF_00158">
    <property type="entry name" value="PanC"/>
    <property type="match status" value="1"/>
</dbReference>
<dbReference type="InterPro" id="IPR004821">
    <property type="entry name" value="Cyt_trans-like"/>
</dbReference>
<dbReference type="InterPro" id="IPR003721">
    <property type="entry name" value="Pantoate_ligase"/>
</dbReference>
<dbReference type="InterPro" id="IPR042176">
    <property type="entry name" value="Pantoate_ligase_C"/>
</dbReference>
<dbReference type="InterPro" id="IPR014729">
    <property type="entry name" value="Rossmann-like_a/b/a_fold"/>
</dbReference>
<dbReference type="NCBIfam" id="TIGR00125">
    <property type="entry name" value="cyt_tran_rel"/>
    <property type="match status" value="1"/>
</dbReference>
<dbReference type="NCBIfam" id="TIGR00018">
    <property type="entry name" value="panC"/>
    <property type="match status" value="1"/>
</dbReference>
<dbReference type="PANTHER" id="PTHR21299">
    <property type="entry name" value="CYTIDYLATE KINASE/PANTOATE-BETA-ALANINE LIGASE"/>
    <property type="match status" value="1"/>
</dbReference>
<dbReference type="PANTHER" id="PTHR21299:SF1">
    <property type="entry name" value="PANTOATE--BETA-ALANINE LIGASE"/>
    <property type="match status" value="1"/>
</dbReference>
<dbReference type="Pfam" id="PF02569">
    <property type="entry name" value="Pantoate_ligase"/>
    <property type="match status" value="1"/>
</dbReference>
<dbReference type="SUPFAM" id="SSF52374">
    <property type="entry name" value="Nucleotidylyl transferase"/>
    <property type="match status" value="1"/>
</dbReference>
<feature type="chain" id="PRO_1000097119" description="Pantothenate synthetase">
    <location>
        <begin position="1"/>
        <end position="280"/>
    </location>
</feature>
<feature type="active site" description="Proton donor" evidence="1">
    <location>
        <position position="37"/>
    </location>
</feature>
<feature type="binding site" evidence="1">
    <location>
        <begin position="30"/>
        <end position="37"/>
    </location>
    <ligand>
        <name>ATP</name>
        <dbReference type="ChEBI" id="CHEBI:30616"/>
    </ligand>
</feature>
<feature type="binding site" evidence="1">
    <location>
        <position position="61"/>
    </location>
    <ligand>
        <name>(R)-pantoate</name>
        <dbReference type="ChEBI" id="CHEBI:15980"/>
    </ligand>
</feature>
<feature type="binding site" evidence="1">
    <location>
        <position position="61"/>
    </location>
    <ligand>
        <name>beta-alanine</name>
        <dbReference type="ChEBI" id="CHEBI:57966"/>
    </ligand>
</feature>
<feature type="binding site" evidence="1">
    <location>
        <begin position="147"/>
        <end position="150"/>
    </location>
    <ligand>
        <name>ATP</name>
        <dbReference type="ChEBI" id="CHEBI:30616"/>
    </ligand>
</feature>
<feature type="binding site" evidence="1">
    <location>
        <position position="153"/>
    </location>
    <ligand>
        <name>(R)-pantoate</name>
        <dbReference type="ChEBI" id="CHEBI:15980"/>
    </ligand>
</feature>
<feature type="binding site" evidence="1">
    <location>
        <position position="176"/>
    </location>
    <ligand>
        <name>ATP</name>
        <dbReference type="ChEBI" id="CHEBI:30616"/>
    </ligand>
</feature>
<feature type="binding site" evidence="1">
    <location>
        <begin position="184"/>
        <end position="187"/>
    </location>
    <ligand>
        <name>ATP</name>
        <dbReference type="ChEBI" id="CHEBI:30616"/>
    </ligand>
</feature>
<comment type="function">
    <text evidence="1">Catalyzes the condensation of pantoate with beta-alanine in an ATP-dependent reaction via a pantoyl-adenylate intermediate.</text>
</comment>
<comment type="catalytic activity">
    <reaction evidence="1">
        <text>(R)-pantoate + beta-alanine + ATP = (R)-pantothenate + AMP + diphosphate + H(+)</text>
        <dbReference type="Rhea" id="RHEA:10912"/>
        <dbReference type="ChEBI" id="CHEBI:15378"/>
        <dbReference type="ChEBI" id="CHEBI:15980"/>
        <dbReference type="ChEBI" id="CHEBI:29032"/>
        <dbReference type="ChEBI" id="CHEBI:30616"/>
        <dbReference type="ChEBI" id="CHEBI:33019"/>
        <dbReference type="ChEBI" id="CHEBI:57966"/>
        <dbReference type="ChEBI" id="CHEBI:456215"/>
        <dbReference type="EC" id="6.3.2.1"/>
    </reaction>
</comment>
<comment type="pathway">
    <text evidence="1">Cofactor biosynthesis; (R)-pantothenate biosynthesis; (R)-pantothenate from (R)-pantoate and beta-alanine: step 1/1.</text>
</comment>
<comment type="subunit">
    <text evidence="1">Homodimer.</text>
</comment>
<comment type="subcellular location">
    <subcellularLocation>
        <location evidence="1">Cytoplasm</location>
    </subcellularLocation>
</comment>
<comment type="miscellaneous">
    <text evidence="1">The reaction proceeds by a bi uni uni bi ping pong mechanism.</text>
</comment>
<comment type="similarity">
    <text evidence="1">Belongs to the pantothenate synthetase family.</text>
</comment>
<proteinExistence type="inferred from homology"/>
<evidence type="ECO:0000255" key="1">
    <source>
        <dbReference type="HAMAP-Rule" id="MF_00158"/>
    </source>
</evidence>
<organism>
    <name type="scientific">Sulfurihydrogenibium sp. (strain YO3AOP1)</name>
    <dbReference type="NCBI Taxonomy" id="436114"/>
    <lineage>
        <taxon>Bacteria</taxon>
        <taxon>Pseudomonadati</taxon>
        <taxon>Aquificota</taxon>
        <taxon>Aquificia</taxon>
        <taxon>Aquificales</taxon>
        <taxon>Hydrogenothermaceae</taxon>
        <taxon>Sulfurihydrogenibium</taxon>
    </lineage>
</organism>